<name>EFTS_COXB1</name>
<gene>
    <name evidence="1" type="primary">tsf</name>
    <name type="ordered locus">CbuK_1456</name>
</gene>
<sequence>MTTITPIMVKELRERTGAAVMACKKALQETNGDMEAAIDLLRKAGDAKAAKRAGKTAAEGVIVIAISKDQKKGFMAEVNSETDFVARDTNFMAFASKVAERGLAEGVSDVAATLALPIEPNSSSTIEDERKALVNRIGENIQIRRVASLSSDGVVGHYSHGGRIGVLLALDVPNPELVKGLAMHVAAFNPQAVSANQVSTEFVEKEKEIFLARAQETGKPANIIEKMVKGQVEKLLKEVSLEGQSFVKDPEKLVGDLLKAEKAKVLAFLRFEVGEGVEKESQNFADEVMAQVQGNR</sequence>
<keyword id="KW-0963">Cytoplasm</keyword>
<keyword id="KW-0251">Elongation factor</keyword>
<keyword id="KW-0648">Protein biosynthesis</keyword>
<reference key="1">
    <citation type="journal article" date="2009" name="Infect. Immun.">
        <title>Comparative genomics reveal extensive transposon-mediated genomic plasticity and diversity among potential effector proteins within the genus Coxiella.</title>
        <authorList>
            <person name="Beare P.A."/>
            <person name="Unsworth N."/>
            <person name="Andoh M."/>
            <person name="Voth D.E."/>
            <person name="Omsland A."/>
            <person name="Gilk S.D."/>
            <person name="Williams K.P."/>
            <person name="Sobral B.W."/>
            <person name="Kupko J.J. III"/>
            <person name="Porcella S.F."/>
            <person name="Samuel J.E."/>
            <person name="Heinzen R.A."/>
        </authorList>
    </citation>
    <scope>NUCLEOTIDE SEQUENCE [LARGE SCALE GENOMIC DNA]</scope>
    <source>
        <strain>CbuK_Q154</strain>
    </source>
</reference>
<comment type="function">
    <text evidence="1">Associates with the EF-Tu.GDP complex and induces the exchange of GDP to GTP. It remains bound to the aminoacyl-tRNA.EF-Tu.GTP complex up to the GTP hydrolysis stage on the ribosome.</text>
</comment>
<comment type="subcellular location">
    <subcellularLocation>
        <location evidence="1">Cytoplasm</location>
    </subcellularLocation>
</comment>
<comment type="similarity">
    <text evidence="1">Belongs to the EF-Ts family.</text>
</comment>
<accession>B6J8M6</accession>
<organism>
    <name type="scientific">Coxiella burnetii (strain CbuK_Q154)</name>
    <name type="common">Coxiella burnetii (strain Q154)</name>
    <dbReference type="NCBI Taxonomy" id="434924"/>
    <lineage>
        <taxon>Bacteria</taxon>
        <taxon>Pseudomonadati</taxon>
        <taxon>Pseudomonadota</taxon>
        <taxon>Gammaproteobacteria</taxon>
        <taxon>Legionellales</taxon>
        <taxon>Coxiellaceae</taxon>
        <taxon>Coxiella</taxon>
    </lineage>
</organism>
<evidence type="ECO:0000255" key="1">
    <source>
        <dbReference type="HAMAP-Rule" id="MF_00050"/>
    </source>
</evidence>
<proteinExistence type="inferred from homology"/>
<dbReference type="EMBL" id="CP001020">
    <property type="protein sequence ID" value="ACJ20625.1"/>
    <property type="molecule type" value="Genomic_DNA"/>
</dbReference>
<dbReference type="RefSeq" id="WP_005771684.1">
    <property type="nucleotide sequence ID" value="NC_011528.1"/>
</dbReference>
<dbReference type="SMR" id="B6J8M6"/>
<dbReference type="KEGG" id="cbc:CbuK_1456"/>
<dbReference type="HOGENOM" id="CLU_047155_0_2_6"/>
<dbReference type="GO" id="GO:0005737">
    <property type="term" value="C:cytoplasm"/>
    <property type="evidence" value="ECO:0007669"/>
    <property type="project" value="UniProtKB-SubCell"/>
</dbReference>
<dbReference type="GO" id="GO:0003746">
    <property type="term" value="F:translation elongation factor activity"/>
    <property type="evidence" value="ECO:0007669"/>
    <property type="project" value="UniProtKB-UniRule"/>
</dbReference>
<dbReference type="CDD" id="cd14275">
    <property type="entry name" value="UBA_EF-Ts"/>
    <property type="match status" value="1"/>
</dbReference>
<dbReference type="FunFam" id="1.10.286.20:FF:000001">
    <property type="entry name" value="Elongation factor Ts"/>
    <property type="match status" value="1"/>
</dbReference>
<dbReference type="FunFam" id="1.10.8.10:FF:000001">
    <property type="entry name" value="Elongation factor Ts"/>
    <property type="match status" value="1"/>
</dbReference>
<dbReference type="FunFam" id="3.30.479.20:FF:000001">
    <property type="entry name" value="Elongation factor Ts"/>
    <property type="match status" value="1"/>
</dbReference>
<dbReference type="Gene3D" id="1.10.286.20">
    <property type="match status" value="1"/>
</dbReference>
<dbReference type="Gene3D" id="1.10.8.10">
    <property type="entry name" value="DNA helicase RuvA subunit, C-terminal domain"/>
    <property type="match status" value="1"/>
</dbReference>
<dbReference type="Gene3D" id="3.30.479.20">
    <property type="entry name" value="Elongation factor Ts, dimerisation domain"/>
    <property type="match status" value="2"/>
</dbReference>
<dbReference type="HAMAP" id="MF_00050">
    <property type="entry name" value="EF_Ts"/>
    <property type="match status" value="1"/>
</dbReference>
<dbReference type="InterPro" id="IPR036402">
    <property type="entry name" value="EF-Ts_dimer_sf"/>
</dbReference>
<dbReference type="InterPro" id="IPR001816">
    <property type="entry name" value="Transl_elong_EFTs/EF1B"/>
</dbReference>
<dbReference type="InterPro" id="IPR014039">
    <property type="entry name" value="Transl_elong_EFTs/EF1B_dimer"/>
</dbReference>
<dbReference type="InterPro" id="IPR018101">
    <property type="entry name" value="Transl_elong_Ts_CS"/>
</dbReference>
<dbReference type="InterPro" id="IPR009060">
    <property type="entry name" value="UBA-like_sf"/>
</dbReference>
<dbReference type="NCBIfam" id="TIGR00116">
    <property type="entry name" value="tsf"/>
    <property type="match status" value="1"/>
</dbReference>
<dbReference type="PANTHER" id="PTHR11741">
    <property type="entry name" value="ELONGATION FACTOR TS"/>
    <property type="match status" value="1"/>
</dbReference>
<dbReference type="PANTHER" id="PTHR11741:SF0">
    <property type="entry name" value="ELONGATION FACTOR TS, MITOCHONDRIAL"/>
    <property type="match status" value="1"/>
</dbReference>
<dbReference type="Pfam" id="PF00889">
    <property type="entry name" value="EF_TS"/>
    <property type="match status" value="1"/>
</dbReference>
<dbReference type="SUPFAM" id="SSF54713">
    <property type="entry name" value="Elongation factor Ts (EF-Ts), dimerisation domain"/>
    <property type="match status" value="2"/>
</dbReference>
<dbReference type="SUPFAM" id="SSF46934">
    <property type="entry name" value="UBA-like"/>
    <property type="match status" value="1"/>
</dbReference>
<dbReference type="PROSITE" id="PS01126">
    <property type="entry name" value="EF_TS_1"/>
    <property type="match status" value="1"/>
</dbReference>
<dbReference type="PROSITE" id="PS01127">
    <property type="entry name" value="EF_TS_2"/>
    <property type="match status" value="1"/>
</dbReference>
<protein>
    <recommendedName>
        <fullName evidence="1">Elongation factor Ts</fullName>
        <shortName evidence="1">EF-Ts</shortName>
    </recommendedName>
</protein>
<feature type="chain" id="PRO_1000116719" description="Elongation factor Ts">
    <location>
        <begin position="1"/>
        <end position="296"/>
    </location>
</feature>
<feature type="region of interest" description="Involved in Mg(2+) ion dislocation from EF-Tu" evidence="1">
    <location>
        <begin position="82"/>
        <end position="85"/>
    </location>
</feature>